<proteinExistence type="inferred from homology"/>
<comment type="function">
    <text evidence="1">Non-structural protein which is dispensable for virus replication in cell culture.</text>
</comment>
<comment type="subunit">
    <text evidence="1">Interacts with the spike glycoprotein, M protein, E protein and the accessory protein 3.</text>
</comment>
<comment type="subcellular location">
    <subcellularLocation>
        <location evidence="1">Virion</location>
    </subcellularLocation>
    <subcellularLocation>
        <location evidence="1">Host endoplasmic reticulum membrane</location>
        <topology evidence="1">Single-pass membrane protein</topology>
    </subcellularLocation>
    <subcellularLocation>
        <location evidence="1">Host endoplasmic reticulum-Golgi intermediate compartment membrane</location>
        <topology evidence="1">Single-pass type I membrane protein</topology>
    </subcellularLocation>
    <subcellularLocation>
        <location evidence="1">Host Golgi apparatus membrane</location>
        <topology evidence="1">Single-pass membrane protein</topology>
    </subcellularLocation>
</comment>
<comment type="domain">
    <text evidence="1">The di-lysine motif confers endoplasmic reticulum localization for type I membrane proteins.</text>
</comment>
<comment type="miscellaneous">
    <text>Bat coronavirus 279/2005 is highly similar to SARS-CoV (SARS-like).</text>
</comment>
<evidence type="ECO:0000250" key="1"/>
<evidence type="ECO:0000255" key="2"/>
<evidence type="ECO:0000255" key="3">
    <source>
        <dbReference type="PROSITE-ProRule" id="PRU01267"/>
    </source>
</evidence>
<sequence>MKIILFLTLIALASSELYHYQECVRGTTVLLKEPCPSGTYEGNSPFHPLADNKFALTCISTHFAFACADGTRHTYQLRARSVSPKLFTRQEEVHQELYSPLFLIVAALVFIILCFTIKRKTE</sequence>
<gene>
    <name type="ORF">7a</name>
</gene>
<organismHost>
    <name type="scientific">Rhinolophus macrotis</name>
    <name type="common">Big-eared horseshoe bat</name>
    <dbReference type="NCBI Taxonomy" id="196889"/>
</organismHost>
<dbReference type="EMBL" id="DQ648857">
    <property type="protein sequence ID" value="ABG47074.1"/>
    <property type="molecule type" value="Genomic_RNA"/>
</dbReference>
<dbReference type="SMR" id="Q0Q470"/>
<dbReference type="Proteomes" id="UP000006573">
    <property type="component" value="Genome"/>
</dbReference>
<dbReference type="GO" id="GO:0044167">
    <property type="term" value="C:host cell endoplasmic reticulum membrane"/>
    <property type="evidence" value="ECO:0007669"/>
    <property type="project" value="UniProtKB-SubCell"/>
</dbReference>
<dbReference type="GO" id="GO:0044173">
    <property type="term" value="C:host cell endoplasmic reticulum-Golgi intermediate compartment membrane"/>
    <property type="evidence" value="ECO:0007669"/>
    <property type="project" value="UniProtKB-SubCell"/>
</dbReference>
<dbReference type="GO" id="GO:0044178">
    <property type="term" value="C:host cell Golgi membrane"/>
    <property type="evidence" value="ECO:0007669"/>
    <property type="project" value="UniProtKB-SubCell"/>
</dbReference>
<dbReference type="GO" id="GO:0016020">
    <property type="term" value="C:membrane"/>
    <property type="evidence" value="ECO:0007669"/>
    <property type="project" value="UniProtKB-KW"/>
</dbReference>
<dbReference type="GO" id="GO:0044423">
    <property type="term" value="C:virion component"/>
    <property type="evidence" value="ECO:0007669"/>
    <property type="project" value="UniProtKB-KW"/>
</dbReference>
<dbReference type="GO" id="GO:0039646">
    <property type="term" value="P:symbiont-mediated perturbation of host cell cycle G0/G1 transition checkpoint"/>
    <property type="evidence" value="ECO:0007669"/>
    <property type="project" value="UniProtKB-KW"/>
</dbReference>
<dbReference type="GO" id="GO:0044071">
    <property type="term" value="P:symbiont-mediated perturbation of host cell cycle progression"/>
    <property type="evidence" value="ECO:0007669"/>
    <property type="project" value="UniProtKB-KW"/>
</dbReference>
<dbReference type="Gene3D" id="2.60.40.1550">
    <property type="entry name" value="SARS coronavirus X4"/>
    <property type="match status" value="1"/>
</dbReference>
<dbReference type="InterPro" id="IPR014888">
    <property type="entry name" value="ORF7a_SARS-CoV-like"/>
</dbReference>
<dbReference type="InterPro" id="IPR044871">
    <property type="entry name" value="ORF7a_SARS-CoV-like_X4e"/>
</dbReference>
<dbReference type="InterPro" id="IPR036495">
    <property type="entry name" value="ORF7a_sf_CoV"/>
</dbReference>
<dbReference type="Pfam" id="PF08779">
    <property type="entry name" value="bCoV_NS7A"/>
    <property type="match status" value="1"/>
</dbReference>
<dbReference type="SUPFAM" id="SSF117066">
    <property type="entry name" value="Accessory protein X4 (ORF8, ORF7a)"/>
    <property type="match status" value="1"/>
</dbReference>
<dbReference type="PROSITE" id="PS51919">
    <property type="entry name" value="X4E"/>
    <property type="match status" value="1"/>
</dbReference>
<protein>
    <recommendedName>
        <fullName>Protein 7a</fullName>
    </recommendedName>
    <alternativeName>
        <fullName>Accessory protein 7a</fullName>
    </alternativeName>
</protein>
<reference key="1">
    <citation type="journal article" date="2006" name="J. Virol.">
        <title>Prevalence and genetic diversity of coronaviruses in bats from China.</title>
        <authorList>
            <person name="Tang X.C."/>
            <person name="Zhang J.X."/>
            <person name="Zhang S.Y."/>
            <person name="Wang P."/>
            <person name="Fan X.H."/>
            <person name="Li L.F."/>
            <person name="Li G."/>
            <person name="Dong B.Q."/>
            <person name="Liu W."/>
            <person name="Cheung C.L."/>
            <person name="Xu K.M."/>
            <person name="Song W.J."/>
            <person name="Vijaykrishna D."/>
            <person name="Poon L.L.M."/>
            <person name="Peiris J.S.M."/>
            <person name="Smith G.J."/>
            <person name="Chen H."/>
            <person name="Guan Y."/>
        </authorList>
    </citation>
    <scope>NUCLEOTIDE SEQUENCE [GENOMIC RNA]</scope>
</reference>
<feature type="signal peptide" evidence="1">
    <location>
        <begin position="1"/>
        <end position="15"/>
    </location>
</feature>
<feature type="chain" id="PRO_0000292946" description="Protein 7a">
    <location>
        <begin position="16"/>
        <end position="122"/>
    </location>
</feature>
<feature type="topological domain" description="Virion surface" evidence="2">
    <location>
        <begin position="16"/>
        <end position="96"/>
    </location>
</feature>
<feature type="transmembrane region" description="Helical" evidence="2">
    <location>
        <begin position="97"/>
        <end position="117"/>
    </location>
</feature>
<feature type="topological domain" description="Intravirion" evidence="2">
    <location>
        <begin position="118"/>
        <end position="122"/>
    </location>
</feature>
<feature type="domain" description="X4e" evidence="3">
    <location>
        <begin position="16"/>
        <end position="81"/>
    </location>
</feature>
<feature type="short sequence motif" description="Di-lysine motif" evidence="1">
    <location>
        <begin position="118"/>
        <end position="122"/>
    </location>
</feature>
<feature type="disulfide bond" evidence="3">
    <location>
        <begin position="23"/>
        <end position="58"/>
    </location>
</feature>
<feature type="disulfide bond" evidence="3">
    <location>
        <begin position="35"/>
        <end position="67"/>
    </location>
</feature>
<name>NS7A_BC279</name>
<keyword id="KW-1015">Disulfide bond</keyword>
<keyword id="KW-1077">G0/G1 host cell cycle checkpoint dysregulation by virus</keyword>
<keyword id="KW-1038">Host endoplasmic reticulum</keyword>
<keyword id="KW-1040">Host Golgi apparatus</keyword>
<keyword id="KW-1043">Host membrane</keyword>
<keyword id="KW-0945">Host-virus interaction</keyword>
<keyword id="KW-0472">Membrane</keyword>
<keyword id="KW-1121">Modulation of host cell cycle by virus</keyword>
<keyword id="KW-0732">Signal</keyword>
<keyword id="KW-0812">Transmembrane</keyword>
<keyword id="KW-1133">Transmembrane helix</keyword>
<keyword id="KW-0946">Virion</keyword>
<accession>Q0Q470</accession>
<organism>
    <name type="scientific">Bat coronavirus 279/2005</name>
    <name type="common">BtCoV</name>
    <name type="synonym">BtCoV/279/2005</name>
    <dbReference type="NCBI Taxonomy" id="389167"/>
    <lineage>
        <taxon>Viruses</taxon>
        <taxon>Riboviria</taxon>
        <taxon>Orthornavirae</taxon>
        <taxon>Pisuviricota</taxon>
        <taxon>Pisoniviricetes</taxon>
        <taxon>Nidovirales</taxon>
        <taxon>Cornidovirineae</taxon>
        <taxon>Coronaviridae</taxon>
        <taxon>Orthocoronavirinae</taxon>
        <taxon>Betacoronavirus</taxon>
        <taxon>Sarbecovirus</taxon>
        <taxon>Severe acute respiratory syndrome coronavirus</taxon>
    </lineage>
</organism>